<evidence type="ECO:0000250" key="1">
    <source>
        <dbReference type="UniProtKB" id="P24137"/>
    </source>
</evidence>
<evidence type="ECO:0000255" key="2">
    <source>
        <dbReference type="PROSITE-ProRule" id="PRU00434"/>
    </source>
</evidence>
<evidence type="ECO:0000305" key="3"/>
<gene>
    <name type="primary">oppF</name>
    <name type="ordered locus">SMU_259</name>
</gene>
<protein>
    <recommendedName>
        <fullName evidence="3">Oligopeptide transport ATP-binding protein OppF</fullName>
        <ecNumber evidence="1">7.4.2.6</ecNumber>
    </recommendedName>
</protein>
<sequence>MTENRKKLVEVKNVSLTFNKGKANQVKAIDNVSFNIYEGEVFGLVGESGSGKTTIGRAILKLYNIDKGEIDFEGETISKLKGKSLFNFRKKAQMIFQDPQASLNSRMKVRDIIAEGLDVHKLVKNKADRDAKVQDLLDLVGLNKDHLTRYPHEFSGGQRQRIGIARALAVEPKFIIADEPISALDVSIQAQVVNLMQKLQHEQGLTYLFIAHDLSMVKYISDRIGVMHWGKIVEIGTSDEVYHHPIHPYTQSLLSAVPEPDPVLERQRIHKVYDPVDELDGQEREMREITPGHFVLATEEEAKAYKKK</sequence>
<dbReference type="EC" id="7.4.2.6" evidence="1"/>
<dbReference type="EMBL" id="AE014133">
    <property type="protein sequence ID" value="AAN58028.1"/>
    <property type="molecule type" value="Genomic_DNA"/>
</dbReference>
<dbReference type="EMBL" id="U75477">
    <property type="protein sequence ID" value="AAB41195.1"/>
    <property type="status" value="ALT_INIT"/>
    <property type="molecule type" value="Genomic_DNA"/>
</dbReference>
<dbReference type="RefSeq" id="NP_720722.1">
    <property type="nucleotide sequence ID" value="NC_004350.2"/>
</dbReference>
<dbReference type="RefSeq" id="WP_002262736.1">
    <property type="nucleotide sequence ID" value="NC_004350.2"/>
</dbReference>
<dbReference type="SMR" id="P72479"/>
<dbReference type="STRING" id="210007.SMU_259"/>
<dbReference type="KEGG" id="smu:SMU_259"/>
<dbReference type="PATRIC" id="fig|210007.7.peg.225"/>
<dbReference type="eggNOG" id="COG4608">
    <property type="taxonomic scope" value="Bacteria"/>
</dbReference>
<dbReference type="HOGENOM" id="CLU_000604_1_23_9"/>
<dbReference type="OrthoDB" id="9802264at2"/>
<dbReference type="PhylomeDB" id="P72479"/>
<dbReference type="Proteomes" id="UP000002512">
    <property type="component" value="Chromosome"/>
</dbReference>
<dbReference type="GO" id="GO:0005886">
    <property type="term" value="C:plasma membrane"/>
    <property type="evidence" value="ECO:0007669"/>
    <property type="project" value="UniProtKB-SubCell"/>
</dbReference>
<dbReference type="GO" id="GO:0005524">
    <property type="term" value="F:ATP binding"/>
    <property type="evidence" value="ECO:0007669"/>
    <property type="project" value="UniProtKB-KW"/>
</dbReference>
<dbReference type="GO" id="GO:0016887">
    <property type="term" value="F:ATP hydrolysis activity"/>
    <property type="evidence" value="ECO:0007669"/>
    <property type="project" value="InterPro"/>
</dbReference>
<dbReference type="GO" id="GO:0015833">
    <property type="term" value="P:peptide transport"/>
    <property type="evidence" value="ECO:0007669"/>
    <property type="project" value="UniProtKB-KW"/>
</dbReference>
<dbReference type="GO" id="GO:0015031">
    <property type="term" value="P:protein transport"/>
    <property type="evidence" value="ECO:0007669"/>
    <property type="project" value="UniProtKB-KW"/>
</dbReference>
<dbReference type="GO" id="GO:0055085">
    <property type="term" value="P:transmembrane transport"/>
    <property type="evidence" value="ECO:0007669"/>
    <property type="project" value="UniProtKB-ARBA"/>
</dbReference>
<dbReference type="CDD" id="cd03257">
    <property type="entry name" value="ABC_NikE_OppD_transporters"/>
    <property type="match status" value="1"/>
</dbReference>
<dbReference type="FunFam" id="3.40.50.300:FF:000016">
    <property type="entry name" value="Oligopeptide ABC transporter ATP-binding component"/>
    <property type="match status" value="1"/>
</dbReference>
<dbReference type="Gene3D" id="3.40.50.300">
    <property type="entry name" value="P-loop containing nucleotide triphosphate hydrolases"/>
    <property type="match status" value="1"/>
</dbReference>
<dbReference type="InterPro" id="IPR003593">
    <property type="entry name" value="AAA+_ATPase"/>
</dbReference>
<dbReference type="InterPro" id="IPR050319">
    <property type="entry name" value="ABC_transp_ATP-bind"/>
</dbReference>
<dbReference type="InterPro" id="IPR003439">
    <property type="entry name" value="ABC_transporter-like_ATP-bd"/>
</dbReference>
<dbReference type="InterPro" id="IPR017871">
    <property type="entry name" value="ABC_transporter-like_CS"/>
</dbReference>
<dbReference type="InterPro" id="IPR013563">
    <property type="entry name" value="Oligopep_ABC_C"/>
</dbReference>
<dbReference type="InterPro" id="IPR027417">
    <property type="entry name" value="P-loop_NTPase"/>
</dbReference>
<dbReference type="PANTHER" id="PTHR43776:SF7">
    <property type="entry name" value="D,D-DIPEPTIDE TRANSPORT ATP-BINDING PROTEIN DDPF-RELATED"/>
    <property type="match status" value="1"/>
</dbReference>
<dbReference type="PANTHER" id="PTHR43776">
    <property type="entry name" value="TRANSPORT ATP-BINDING PROTEIN"/>
    <property type="match status" value="1"/>
</dbReference>
<dbReference type="Pfam" id="PF00005">
    <property type="entry name" value="ABC_tran"/>
    <property type="match status" value="1"/>
</dbReference>
<dbReference type="Pfam" id="PF08352">
    <property type="entry name" value="oligo_HPY"/>
    <property type="match status" value="1"/>
</dbReference>
<dbReference type="SMART" id="SM00382">
    <property type="entry name" value="AAA"/>
    <property type="match status" value="1"/>
</dbReference>
<dbReference type="SUPFAM" id="SSF52540">
    <property type="entry name" value="P-loop containing nucleoside triphosphate hydrolases"/>
    <property type="match status" value="1"/>
</dbReference>
<dbReference type="PROSITE" id="PS00211">
    <property type="entry name" value="ABC_TRANSPORTER_1"/>
    <property type="match status" value="1"/>
</dbReference>
<dbReference type="PROSITE" id="PS50893">
    <property type="entry name" value="ABC_TRANSPORTER_2"/>
    <property type="match status" value="1"/>
</dbReference>
<accession>P72479</accession>
<keyword id="KW-0067">ATP-binding</keyword>
<keyword id="KW-1003">Cell membrane</keyword>
<keyword id="KW-0472">Membrane</keyword>
<keyword id="KW-0547">Nucleotide-binding</keyword>
<keyword id="KW-0571">Peptide transport</keyword>
<keyword id="KW-0653">Protein transport</keyword>
<keyword id="KW-1185">Reference proteome</keyword>
<keyword id="KW-1278">Translocase</keyword>
<keyword id="KW-0813">Transport</keyword>
<comment type="function">
    <text evidence="1">Part of the ABC transporter complex OppABCDF involved in the uptake of oligopeptides (By similarity). Probably responsible for energy coupling to the transport system (By similarity).</text>
</comment>
<comment type="catalytic activity">
    <reaction evidence="1">
        <text>a [peptide](out) + ATP + H2O = a [peptide](in) + ADP + phosphate + H(+)</text>
        <dbReference type="Rhea" id="RHEA:78459"/>
        <dbReference type="Rhea" id="RHEA-COMP:19083"/>
        <dbReference type="ChEBI" id="CHEBI:15377"/>
        <dbReference type="ChEBI" id="CHEBI:15378"/>
        <dbReference type="ChEBI" id="CHEBI:30616"/>
        <dbReference type="ChEBI" id="CHEBI:33710"/>
        <dbReference type="ChEBI" id="CHEBI:43474"/>
        <dbReference type="ChEBI" id="CHEBI:456216"/>
        <dbReference type="EC" id="7.4.2.6"/>
    </reaction>
    <physiologicalReaction direction="left-to-right" evidence="1">
        <dbReference type="Rhea" id="RHEA:78460"/>
    </physiologicalReaction>
</comment>
<comment type="subunit">
    <text evidence="1">The complex is composed of two ATP-binding proteins (OppD and OppF), two transmembrane proteins (OppB and OppC) and a solute-binding protein (OppA).</text>
</comment>
<comment type="subcellular location">
    <subcellularLocation>
        <location evidence="1">Cell membrane</location>
        <topology evidence="1">Peripheral membrane protein</topology>
    </subcellularLocation>
</comment>
<comment type="similarity">
    <text evidence="3">Belongs to the ABC transporter superfamily.</text>
</comment>
<comment type="sequence caution" evidence="3">
    <conflict type="erroneous initiation">
        <sequence resource="EMBL-CDS" id="AAB41195"/>
    </conflict>
</comment>
<name>OPPF_STRMU</name>
<reference key="1">
    <citation type="journal article" date="2002" name="Proc. Natl. Acad. Sci. U.S.A.">
        <title>Genome sequence of Streptococcus mutans UA159, a cariogenic dental pathogen.</title>
        <authorList>
            <person name="Ajdic D.J."/>
            <person name="McShan W.M."/>
            <person name="McLaughlin R.E."/>
            <person name="Savic G."/>
            <person name="Chang J."/>
            <person name="Carson M.B."/>
            <person name="Primeaux C."/>
            <person name="Tian R."/>
            <person name="Kenton S."/>
            <person name="Jia H.G."/>
            <person name="Lin S.P."/>
            <person name="Qian Y."/>
            <person name="Li S."/>
            <person name="Zhu H."/>
            <person name="Najar F.Z."/>
            <person name="Lai H."/>
            <person name="White J."/>
            <person name="Roe B.A."/>
            <person name="Ferretti J.J."/>
        </authorList>
    </citation>
    <scope>NUCLEOTIDE SEQUENCE [LARGE SCALE GENOMIC DNA]</scope>
    <source>
        <strain>ATCC 700610 / UA159</strain>
    </source>
</reference>
<reference key="2">
    <citation type="submission" date="1996-10" db="EMBL/GenBank/DDBJ databases">
        <authorList>
            <person name="Peruzzi F."/>
            <person name="Piggot P.J."/>
            <person name="Daneo-Moore L."/>
        </authorList>
    </citation>
    <scope>NUCLEOTIDE SEQUENCE [GENOMIC DNA] OF 1-97</scope>
    <source>
        <strain>GS-5</strain>
    </source>
</reference>
<proteinExistence type="inferred from homology"/>
<organism>
    <name type="scientific">Streptococcus mutans serotype c (strain ATCC 700610 / UA159)</name>
    <dbReference type="NCBI Taxonomy" id="210007"/>
    <lineage>
        <taxon>Bacteria</taxon>
        <taxon>Bacillati</taxon>
        <taxon>Bacillota</taxon>
        <taxon>Bacilli</taxon>
        <taxon>Lactobacillales</taxon>
        <taxon>Streptococcaceae</taxon>
        <taxon>Streptococcus</taxon>
    </lineage>
</organism>
<feature type="chain" id="PRO_0000092664" description="Oligopeptide transport ATP-binding protein OppF">
    <location>
        <begin position="1"/>
        <end position="308"/>
    </location>
</feature>
<feature type="domain" description="ABC transporter" evidence="2">
    <location>
        <begin position="9"/>
        <end position="254"/>
    </location>
</feature>
<feature type="binding site" evidence="2">
    <location>
        <begin position="46"/>
        <end position="53"/>
    </location>
    <ligand>
        <name>ATP</name>
        <dbReference type="ChEBI" id="CHEBI:30616"/>
    </ligand>
</feature>
<feature type="sequence conflict" description="In Ref. 2; AAB41195." evidence="3" ref="2">
    <original>V</original>
    <variation>I</variation>
    <location>
        <position position="9"/>
    </location>
</feature>
<feature type="sequence conflict" description="In Ref. 2; AAB41195." evidence="3" ref="2">
    <original>N</original>
    <variation>D</variation>
    <location>
        <position position="35"/>
    </location>
</feature>